<dbReference type="EMBL" id="L77119">
    <property type="protein sequence ID" value="AAC37069.1"/>
    <property type="status" value="ALT_INIT"/>
    <property type="molecule type" value="Genomic_DNA"/>
</dbReference>
<dbReference type="PIR" id="C64517">
    <property type="entry name" value="C64517"/>
</dbReference>
<dbReference type="RefSeq" id="WP_010890104.1">
    <property type="nucleotide sequence ID" value="NC_001733.1"/>
</dbReference>
<dbReference type="SMR" id="Q60310"/>
<dbReference type="PaxDb" id="243232-MJ_ECS11"/>
<dbReference type="EnsemblBacteria" id="AAC37069">
    <property type="protein sequence ID" value="AAC37069"/>
    <property type="gene ID" value="MJ_ECS11"/>
</dbReference>
<dbReference type="GeneID" id="1450838"/>
<dbReference type="KEGG" id="mja:MJ_ECS11"/>
<dbReference type="HOGENOM" id="CLU_101021_1_0_2"/>
<dbReference type="InParanoid" id="Q60310"/>
<dbReference type="PhylomeDB" id="Q60310"/>
<dbReference type="Proteomes" id="UP000000805">
    <property type="component" value="Plasmid pDSM2661_2"/>
</dbReference>
<dbReference type="Gene3D" id="1.10.287.680">
    <property type="entry name" value="Helix hairpin bin"/>
    <property type="match status" value="1"/>
</dbReference>
<dbReference type="Gene3D" id="1.10.3190.10">
    <property type="entry name" value="yfbu gene product, domain 2"/>
    <property type="match status" value="1"/>
</dbReference>
<dbReference type="HAMAP" id="MF_00762">
    <property type="entry name" value="UPF0304"/>
    <property type="match status" value="1"/>
</dbReference>
<dbReference type="InterPro" id="IPR005587">
    <property type="entry name" value="UPF0304_YfbU"/>
</dbReference>
<dbReference type="InterPro" id="IPR023146">
    <property type="entry name" value="YfbU_alpha-helical_sf"/>
</dbReference>
<dbReference type="InterPro" id="IPR023145">
    <property type="entry name" value="YfbU_helix-hairpin_sf"/>
</dbReference>
<dbReference type="NCBIfam" id="NF003936">
    <property type="entry name" value="PRK05445.1"/>
    <property type="match status" value="1"/>
</dbReference>
<dbReference type="Pfam" id="PF03887">
    <property type="entry name" value="YfbU"/>
    <property type="match status" value="1"/>
</dbReference>
<dbReference type="PIRSF" id="PIRSF006272">
    <property type="entry name" value="UCP006272"/>
    <property type="match status" value="1"/>
</dbReference>
<dbReference type="SUPFAM" id="SSF116960">
    <property type="entry name" value="YfbU-like"/>
    <property type="match status" value="1"/>
</dbReference>
<organism>
    <name type="scientific">Methanocaldococcus jannaschii (strain ATCC 43067 / DSM 2661 / JAL-1 / JCM 10045 / NBRC 100440)</name>
    <name type="common">Methanococcus jannaschii</name>
    <dbReference type="NCBI Taxonomy" id="243232"/>
    <lineage>
        <taxon>Archaea</taxon>
        <taxon>Methanobacteriati</taxon>
        <taxon>Methanobacteriota</taxon>
        <taxon>Methanomada group</taxon>
        <taxon>Methanococci</taxon>
        <taxon>Methanococcales</taxon>
        <taxon>Methanocaldococcaceae</taxon>
        <taxon>Methanocaldococcus</taxon>
    </lineage>
</organism>
<comment type="similarity">
    <text evidence="1">Belongs to the UPF0304 family.</text>
</comment>
<comment type="sequence caution" evidence="2">
    <conflict type="erroneous initiation">
        <sequence resource="EMBL-CDS" id="AAC37069"/>
    </conflict>
</comment>
<proteinExistence type="inferred from homology"/>
<geneLocation type="plasmid">
    <name>small ECE</name>
</geneLocation>
<keyword id="KW-0614">Plasmid</keyword>
<keyword id="KW-1185">Reference proteome</keyword>
<reference key="1">
    <citation type="journal article" date="1996" name="Science">
        <title>Complete genome sequence of the methanogenic archaeon, Methanococcus jannaschii.</title>
        <authorList>
            <person name="Bult C.J."/>
            <person name="White O."/>
            <person name="Olsen G.J."/>
            <person name="Zhou L."/>
            <person name="Fleischmann R.D."/>
            <person name="Sutton G.G."/>
            <person name="Blake J.A."/>
            <person name="FitzGerald L.M."/>
            <person name="Clayton R.A."/>
            <person name="Gocayne J.D."/>
            <person name="Kerlavage A.R."/>
            <person name="Dougherty B.A."/>
            <person name="Tomb J.-F."/>
            <person name="Adams M.D."/>
            <person name="Reich C.I."/>
            <person name="Overbeek R."/>
            <person name="Kirkness E.F."/>
            <person name="Weinstock K.G."/>
            <person name="Merrick J.M."/>
            <person name="Glodek A."/>
            <person name="Scott J.L."/>
            <person name="Geoghagen N.S.M."/>
            <person name="Weidman J.F."/>
            <person name="Fuhrmann J.L."/>
            <person name="Nguyen D."/>
            <person name="Utterback T.R."/>
            <person name="Kelley J.M."/>
            <person name="Peterson J.D."/>
            <person name="Sadow P.W."/>
            <person name="Hanna M.C."/>
            <person name="Cotton M.D."/>
            <person name="Roberts K.M."/>
            <person name="Hurst M.A."/>
            <person name="Kaine B.P."/>
            <person name="Borodovsky M."/>
            <person name="Klenk H.-P."/>
            <person name="Fraser C.M."/>
            <person name="Smith H.O."/>
            <person name="Woese C.R."/>
            <person name="Venter J.C."/>
        </authorList>
    </citation>
    <scope>NUCLEOTIDE SEQUENCE [LARGE SCALE GENOMIC DNA]</scope>
    <source>
        <strain>ATCC 43067 / DSM 2661 / JAL-1 / JCM 10045 / NBRC 100440</strain>
    </source>
</reference>
<protein>
    <recommendedName>
        <fullName evidence="1">UPF0304 protein MJECS11</fullName>
    </recommendedName>
</protein>
<accession>Q60310</accession>
<evidence type="ECO:0000255" key="1">
    <source>
        <dbReference type="HAMAP-Rule" id="MF_00762"/>
    </source>
</evidence>
<evidence type="ECO:0000305" key="2"/>
<gene>
    <name type="ordered locus">MJECS11</name>
</gene>
<sequence length="168" mass="20255">MLSKIERLILANQYKILKILENTSEYDEIIKILEEGYEIFYDEILGHIFDELPESEGQFVLDILSFYDIVVEPYKQKNPNDHEIINHPYSYFKGFDGNSETKYMAFVRFLIEDQKKFSFVAKYAKKTDNFNSHFPMLDKYRKMVELWESKYNKKYDLKREEILDILNA</sequence>
<name>Y3411_METJA</name>
<feature type="chain" id="PRO_0000218176" description="UPF0304 protein MJECS11">
    <location>
        <begin position="1"/>
        <end position="168"/>
    </location>
</feature>